<sequence>MSGKNEIINEKEAVMVQTPVLTLTKPTVEDGAAMWQLAKSSSLDTNSSYKYIMMCEYFDDTCIVAKDGDEVVGFITAFIPPKQQDTLFIWQIGVAASQRGRGLGLDLINKLIEREACKDIRYVEATVTPSNKASQALFRKLARSHQTDCQVSSCFSEQLFPGDSHEQENTFRIGPLRS</sequence>
<accession>Q5WL79</accession>
<dbReference type="EC" id="2.3.1.178"/>
<dbReference type="EMBL" id="AP006627">
    <property type="protein sequence ID" value="BAD62876.1"/>
    <property type="molecule type" value="Genomic_DNA"/>
</dbReference>
<dbReference type="SMR" id="Q5WL79"/>
<dbReference type="STRING" id="66692.ABC0334"/>
<dbReference type="KEGG" id="bcl:ABC0334"/>
<dbReference type="eggNOG" id="COG0456">
    <property type="taxonomic scope" value="Bacteria"/>
</dbReference>
<dbReference type="HOGENOM" id="CLU_111896_0_0_9"/>
<dbReference type="OrthoDB" id="2436196at2"/>
<dbReference type="UniPathway" id="UPA00067">
    <property type="reaction ID" value="UER00122"/>
</dbReference>
<dbReference type="Proteomes" id="UP000001168">
    <property type="component" value="Chromosome"/>
</dbReference>
<dbReference type="GO" id="GO:0033816">
    <property type="term" value="F:diaminobutyrate acetyltransferase activity"/>
    <property type="evidence" value="ECO:0007669"/>
    <property type="project" value="UniProtKB-EC"/>
</dbReference>
<dbReference type="GO" id="GO:0019491">
    <property type="term" value="P:ectoine biosynthetic process"/>
    <property type="evidence" value="ECO:0007669"/>
    <property type="project" value="UniProtKB-UniPathway"/>
</dbReference>
<dbReference type="CDD" id="cd04301">
    <property type="entry name" value="NAT_SF"/>
    <property type="match status" value="1"/>
</dbReference>
<dbReference type="Gene3D" id="3.40.630.30">
    <property type="match status" value="1"/>
</dbReference>
<dbReference type="InterPro" id="IPR016181">
    <property type="entry name" value="Acyl_CoA_acyltransferase"/>
</dbReference>
<dbReference type="InterPro" id="IPR012772">
    <property type="entry name" value="Ectoine_EctA"/>
</dbReference>
<dbReference type="InterPro" id="IPR000182">
    <property type="entry name" value="GNAT_dom"/>
</dbReference>
<dbReference type="NCBIfam" id="TIGR02406">
    <property type="entry name" value="ectoine_EctA"/>
    <property type="match status" value="1"/>
</dbReference>
<dbReference type="PANTHER" id="PTHR43072">
    <property type="entry name" value="N-ACETYLTRANSFERASE"/>
    <property type="match status" value="1"/>
</dbReference>
<dbReference type="PANTHER" id="PTHR43072:SF23">
    <property type="entry name" value="UPF0039 PROTEIN C11D3.02C"/>
    <property type="match status" value="1"/>
</dbReference>
<dbReference type="Pfam" id="PF00583">
    <property type="entry name" value="Acetyltransf_1"/>
    <property type="match status" value="1"/>
</dbReference>
<dbReference type="SUPFAM" id="SSF55729">
    <property type="entry name" value="Acyl-CoA N-acyltransferases (Nat)"/>
    <property type="match status" value="1"/>
</dbReference>
<dbReference type="PROSITE" id="PS51186">
    <property type="entry name" value="GNAT"/>
    <property type="match status" value="1"/>
</dbReference>
<protein>
    <recommendedName>
        <fullName>L-2,4-diaminobutyric acid acetyltransferase</fullName>
        <shortName>DABA acetyltransferase</shortName>
        <ecNumber>2.3.1.178</ecNumber>
    </recommendedName>
</protein>
<comment type="function">
    <text evidence="1">Catalyzes the acetylation of L-2,4-diaminobutyrate (DABA) to gamma-N-acetyl-alpha,gamma-diaminobutyric acid (ADABA) with acetyl coenzyme A.</text>
</comment>
<comment type="catalytic activity">
    <reaction>
        <text>L-2,4-diaminobutanoate + acetyl-CoA = (2S)-4-acetamido-2-aminobutanoate + CoA + H(+)</text>
        <dbReference type="Rhea" id="RHEA:16901"/>
        <dbReference type="ChEBI" id="CHEBI:15378"/>
        <dbReference type="ChEBI" id="CHEBI:57287"/>
        <dbReference type="ChEBI" id="CHEBI:57288"/>
        <dbReference type="ChEBI" id="CHEBI:58761"/>
        <dbReference type="ChEBI" id="CHEBI:58929"/>
        <dbReference type="EC" id="2.3.1.178"/>
    </reaction>
</comment>
<comment type="pathway">
    <text>Amine and polyamine biosynthesis; ectoine biosynthesis; L-ectoine from L-aspartate 4-semialdehyde: step 2/3.</text>
</comment>
<comment type="similarity">
    <text evidence="3">Belongs to the acetyltransferase family. EctA subfamily.</text>
</comment>
<proteinExistence type="inferred from homology"/>
<reference key="1">
    <citation type="submission" date="2003-10" db="EMBL/GenBank/DDBJ databases">
        <title>The complete genome sequence of the alkaliphilic Bacillus clausii KSM-K16.</title>
        <authorList>
            <person name="Takaki Y."/>
            <person name="Kageyama Y."/>
            <person name="Shimamura S."/>
            <person name="Suzuki H."/>
            <person name="Nishi S."/>
            <person name="Hatada Y."/>
            <person name="Kawai S."/>
            <person name="Ito S."/>
            <person name="Horikoshi K."/>
        </authorList>
    </citation>
    <scope>NUCLEOTIDE SEQUENCE [LARGE SCALE GENOMIC DNA]</scope>
    <source>
        <strain>KSM-K16</strain>
    </source>
</reference>
<gene>
    <name type="primary">ectA</name>
    <name type="ordered locus">ABC0334</name>
</gene>
<organism>
    <name type="scientific">Shouchella clausii (strain KSM-K16)</name>
    <name type="common">Alkalihalobacillus clausii</name>
    <dbReference type="NCBI Taxonomy" id="66692"/>
    <lineage>
        <taxon>Bacteria</taxon>
        <taxon>Bacillati</taxon>
        <taxon>Bacillota</taxon>
        <taxon>Bacilli</taxon>
        <taxon>Bacillales</taxon>
        <taxon>Bacillaceae</taxon>
        <taxon>Shouchella</taxon>
    </lineage>
</organism>
<feature type="chain" id="PRO_0000220082" description="L-2,4-diaminobutyric acid acetyltransferase">
    <location>
        <begin position="1"/>
        <end position="178"/>
    </location>
</feature>
<feature type="domain" description="N-acetyltransferase" evidence="2">
    <location>
        <begin position="21"/>
        <end position="174"/>
    </location>
</feature>
<name>ECTA_SHOC1</name>
<evidence type="ECO:0000250" key="1"/>
<evidence type="ECO:0000255" key="2">
    <source>
        <dbReference type="PROSITE-ProRule" id="PRU00532"/>
    </source>
</evidence>
<evidence type="ECO:0000305" key="3"/>
<keyword id="KW-0012">Acyltransferase</keyword>
<keyword id="KW-1185">Reference proteome</keyword>
<keyword id="KW-0808">Transferase</keyword>